<sequence>MADVVLGVGTGVFIITLIWILTLALTIILSRATGPTKLGIIPVVLLALIITLVLVFFPRAAEVPAPQRAAQIVDMFFIGRYVLLSLVSLVFLAALFMLLPLHFLEPIYAKPLRTH</sequence>
<name>TM218_DANRE</name>
<comment type="function">
    <text evidence="1">May be involved in ciliary biogenesis or function.</text>
</comment>
<comment type="subcellular location">
    <subcellularLocation>
        <location evidence="4">Membrane</location>
        <topology evidence="4">Multi-pass membrane protein</topology>
    </subcellularLocation>
    <subcellularLocation>
        <location evidence="1">Cell projection</location>
        <location evidence="1">Cilium</location>
    </subcellularLocation>
    <text evidence="1">Localizes at the transition zone, a region between the basal body and the ciliary axoneme.</text>
</comment>
<comment type="disruption phenotype">
    <text evidence="3">Morpholino knockdown leads to the formation of pronephric cysts and hydrocephalus, features consistent with a ciliopathy.</text>
</comment>
<comment type="similarity">
    <text evidence="4">Belongs to the TMEM218 family.</text>
</comment>
<proteinExistence type="inferred from homology"/>
<evidence type="ECO:0000250" key="1">
    <source>
        <dbReference type="UniProtKB" id="Q9CQ44"/>
    </source>
</evidence>
<evidence type="ECO:0000255" key="2"/>
<evidence type="ECO:0000269" key="3">
    <source>
    </source>
</evidence>
<evidence type="ECO:0000305" key="4"/>
<organism>
    <name type="scientific">Danio rerio</name>
    <name type="common">Zebrafish</name>
    <name type="synonym">Brachydanio rerio</name>
    <dbReference type="NCBI Taxonomy" id="7955"/>
    <lineage>
        <taxon>Eukaryota</taxon>
        <taxon>Metazoa</taxon>
        <taxon>Chordata</taxon>
        <taxon>Craniata</taxon>
        <taxon>Vertebrata</taxon>
        <taxon>Euteleostomi</taxon>
        <taxon>Actinopterygii</taxon>
        <taxon>Neopterygii</taxon>
        <taxon>Teleostei</taxon>
        <taxon>Ostariophysi</taxon>
        <taxon>Cypriniformes</taxon>
        <taxon>Danionidae</taxon>
        <taxon>Danioninae</taxon>
        <taxon>Danio</taxon>
    </lineage>
</organism>
<dbReference type="EMBL" id="BC054131">
    <property type="protein sequence ID" value="AAH54131.1"/>
    <property type="molecule type" value="mRNA"/>
</dbReference>
<dbReference type="RefSeq" id="NP_956692.1">
    <property type="nucleotide sequence ID" value="NM_200398.2"/>
</dbReference>
<dbReference type="RefSeq" id="XP_021334793.1">
    <property type="nucleotide sequence ID" value="XM_021479118.2"/>
</dbReference>
<dbReference type="RefSeq" id="XP_021334794.1">
    <property type="nucleotide sequence ID" value="XM_021479119.2"/>
</dbReference>
<dbReference type="SMR" id="Q7SZ56"/>
<dbReference type="FunCoup" id="Q7SZ56">
    <property type="interactions" value="550"/>
</dbReference>
<dbReference type="STRING" id="7955.ENSDARP00000122434"/>
<dbReference type="PaxDb" id="7955-ENSDARP00000028280"/>
<dbReference type="Ensembl" id="ENSDART00000140988">
    <property type="protein sequence ID" value="ENSDARP00000122434"/>
    <property type="gene ID" value="ENSDARG00000027129"/>
</dbReference>
<dbReference type="Ensembl" id="ENSDART00000185080">
    <property type="protein sequence ID" value="ENSDARP00000145554"/>
    <property type="gene ID" value="ENSDARG00000027129"/>
</dbReference>
<dbReference type="GeneID" id="393369"/>
<dbReference type="KEGG" id="dre:393369"/>
<dbReference type="AGR" id="ZFIN:ZDB-GENE-040426-1232"/>
<dbReference type="CTD" id="219854"/>
<dbReference type="ZFIN" id="ZDB-GENE-040426-1232">
    <property type="gene designation" value="tmem218"/>
</dbReference>
<dbReference type="eggNOG" id="ENOG502S2I1">
    <property type="taxonomic scope" value="Eukaryota"/>
</dbReference>
<dbReference type="HOGENOM" id="CLU_169774_0_0_1"/>
<dbReference type="InParanoid" id="Q7SZ56"/>
<dbReference type="OMA" id="PATEMKI"/>
<dbReference type="PhylomeDB" id="Q7SZ56"/>
<dbReference type="TreeFam" id="TF328597"/>
<dbReference type="PRO" id="PR:Q7SZ56"/>
<dbReference type="Proteomes" id="UP000000437">
    <property type="component" value="Chromosome 10"/>
</dbReference>
<dbReference type="Bgee" id="ENSDARG00000027129">
    <property type="expression patterns" value="Expressed in testis and 20 other cell types or tissues"/>
</dbReference>
<dbReference type="ExpressionAtlas" id="Q7SZ56">
    <property type="expression patterns" value="baseline"/>
</dbReference>
<dbReference type="GO" id="GO:0005929">
    <property type="term" value="C:cilium"/>
    <property type="evidence" value="ECO:0007669"/>
    <property type="project" value="UniProtKB-SubCell"/>
</dbReference>
<dbReference type="GO" id="GO:0005576">
    <property type="term" value="C:extracellular region"/>
    <property type="evidence" value="ECO:0007669"/>
    <property type="project" value="GOC"/>
</dbReference>
<dbReference type="GO" id="GO:0016020">
    <property type="term" value="C:membrane"/>
    <property type="evidence" value="ECO:0007669"/>
    <property type="project" value="UniProtKB-SubCell"/>
</dbReference>
<dbReference type="GO" id="GO:0090660">
    <property type="term" value="P:cerebrospinal fluid circulation"/>
    <property type="evidence" value="ECO:0000315"/>
    <property type="project" value="ZFIN"/>
</dbReference>
<dbReference type="GO" id="GO:0039021">
    <property type="term" value="P:pronephric glomerulus development"/>
    <property type="evidence" value="ECO:0000315"/>
    <property type="project" value="ZFIN"/>
</dbReference>
<dbReference type="GO" id="GO:1901207">
    <property type="term" value="P:regulation of heart looping"/>
    <property type="evidence" value="ECO:0000316"/>
    <property type="project" value="ZFIN"/>
</dbReference>
<dbReference type="InterPro" id="IPR026771">
    <property type="entry name" value="Tmem218"/>
</dbReference>
<dbReference type="PANTHER" id="PTHR31622">
    <property type="entry name" value="TRANSMEMBRANE PROTEIN 218"/>
    <property type="match status" value="1"/>
</dbReference>
<dbReference type="PANTHER" id="PTHR31622:SF1">
    <property type="entry name" value="TRANSMEMBRANE PROTEIN 218"/>
    <property type="match status" value="1"/>
</dbReference>
<feature type="chain" id="PRO_0000359898" description="Transmembrane protein 218">
    <location>
        <begin position="1"/>
        <end position="115"/>
    </location>
</feature>
<feature type="transmembrane region" description="Helical" evidence="2">
    <location>
        <begin position="8"/>
        <end position="28"/>
    </location>
</feature>
<feature type="transmembrane region" description="Helical" evidence="2">
    <location>
        <begin position="38"/>
        <end position="58"/>
    </location>
</feature>
<feature type="transmembrane region" description="Helical" evidence="2">
    <location>
        <begin position="81"/>
        <end position="101"/>
    </location>
</feature>
<keyword id="KW-0966">Cell projection</keyword>
<keyword id="KW-0472">Membrane</keyword>
<keyword id="KW-1185">Reference proteome</keyword>
<keyword id="KW-0812">Transmembrane</keyword>
<keyword id="KW-1133">Transmembrane helix</keyword>
<accession>Q7SZ56</accession>
<reference key="1">
    <citation type="submission" date="2003-06" db="EMBL/GenBank/DDBJ databases">
        <authorList>
            <consortium name="NIH - Zebrafish Gene Collection (ZGC) project"/>
        </authorList>
    </citation>
    <scope>NUCLEOTIDE SEQUENCE [LARGE SCALE MRNA]</scope>
</reference>
<reference key="2">
    <citation type="journal article" date="2022" name="Hum. Mol. Genet.">
        <title>The ciliary transition zone protein TMEM218 synergistically interacts with the NPHP module and its reduced dosage leads to a wide range of syndromic ciliopathies.</title>
        <authorList>
            <person name="Epting D."/>
            <person name="Decker E."/>
            <person name="Ott E."/>
            <person name="Eisenberger T."/>
            <person name="Bader I."/>
            <person name="Bachmann N."/>
            <person name="Bergmann C."/>
        </authorList>
    </citation>
    <scope>DISRUPTION PHENOTYPE</scope>
</reference>
<protein>
    <recommendedName>
        <fullName>Transmembrane protein 218</fullName>
    </recommendedName>
</protein>
<gene>
    <name type="primary">tmem218</name>
    <name type="ORF">zgc:63675</name>
</gene>